<comment type="function">
    <text evidence="1">Together with its co-chaperonin GroES, plays an essential role in assisting protein folding. The GroEL-GroES system forms a nano-cage that allows encapsulation of the non-native substrate proteins and provides a physical environment optimized to promote and accelerate protein folding.</text>
</comment>
<comment type="catalytic activity">
    <reaction evidence="1">
        <text>ATP + H2O + a folded polypeptide = ADP + phosphate + an unfolded polypeptide.</text>
        <dbReference type="EC" id="5.6.1.7"/>
    </reaction>
</comment>
<comment type="subunit">
    <text evidence="1">Forms a cylinder of 14 subunits composed of two heptameric rings stacked back-to-back. Interacts with the co-chaperonin GroES.</text>
</comment>
<comment type="subcellular location">
    <subcellularLocation>
        <location evidence="1">Cytoplasm</location>
    </subcellularLocation>
</comment>
<comment type="similarity">
    <text evidence="1">Belongs to the chaperonin (HSP60) family.</text>
</comment>
<name>CH60_FLAJ1</name>
<dbReference type="EC" id="5.6.1.7" evidence="1"/>
<dbReference type="EMBL" id="CP000685">
    <property type="protein sequence ID" value="ABQ04874.1"/>
    <property type="molecule type" value="Genomic_DNA"/>
</dbReference>
<dbReference type="RefSeq" id="WP_012023918.1">
    <property type="nucleotide sequence ID" value="NZ_MUGZ01000002.1"/>
</dbReference>
<dbReference type="SMR" id="A5FIV1"/>
<dbReference type="STRING" id="376686.Fjoh_1842"/>
<dbReference type="KEGG" id="fjo:Fjoh_1842"/>
<dbReference type="eggNOG" id="COG0459">
    <property type="taxonomic scope" value="Bacteria"/>
</dbReference>
<dbReference type="HOGENOM" id="CLU_016503_3_0_10"/>
<dbReference type="OrthoDB" id="9766614at2"/>
<dbReference type="Proteomes" id="UP000006694">
    <property type="component" value="Chromosome"/>
</dbReference>
<dbReference type="GO" id="GO:0005737">
    <property type="term" value="C:cytoplasm"/>
    <property type="evidence" value="ECO:0007669"/>
    <property type="project" value="UniProtKB-SubCell"/>
</dbReference>
<dbReference type="GO" id="GO:0005524">
    <property type="term" value="F:ATP binding"/>
    <property type="evidence" value="ECO:0007669"/>
    <property type="project" value="UniProtKB-UniRule"/>
</dbReference>
<dbReference type="GO" id="GO:0140662">
    <property type="term" value="F:ATP-dependent protein folding chaperone"/>
    <property type="evidence" value="ECO:0007669"/>
    <property type="project" value="InterPro"/>
</dbReference>
<dbReference type="GO" id="GO:0016853">
    <property type="term" value="F:isomerase activity"/>
    <property type="evidence" value="ECO:0007669"/>
    <property type="project" value="UniProtKB-KW"/>
</dbReference>
<dbReference type="GO" id="GO:0051082">
    <property type="term" value="F:unfolded protein binding"/>
    <property type="evidence" value="ECO:0007669"/>
    <property type="project" value="UniProtKB-UniRule"/>
</dbReference>
<dbReference type="GO" id="GO:0042026">
    <property type="term" value="P:protein refolding"/>
    <property type="evidence" value="ECO:0007669"/>
    <property type="project" value="UniProtKB-UniRule"/>
</dbReference>
<dbReference type="CDD" id="cd03344">
    <property type="entry name" value="GroEL"/>
    <property type="match status" value="1"/>
</dbReference>
<dbReference type="FunFam" id="1.10.560.10:FF:000001">
    <property type="entry name" value="60 kDa chaperonin"/>
    <property type="match status" value="1"/>
</dbReference>
<dbReference type="FunFam" id="3.50.7.10:FF:000001">
    <property type="entry name" value="60 kDa chaperonin"/>
    <property type="match status" value="1"/>
</dbReference>
<dbReference type="Gene3D" id="3.50.7.10">
    <property type="entry name" value="GroEL"/>
    <property type="match status" value="1"/>
</dbReference>
<dbReference type="Gene3D" id="1.10.560.10">
    <property type="entry name" value="GroEL-like equatorial domain"/>
    <property type="match status" value="1"/>
</dbReference>
<dbReference type="Gene3D" id="3.30.260.10">
    <property type="entry name" value="TCP-1-like chaperonin intermediate domain"/>
    <property type="match status" value="1"/>
</dbReference>
<dbReference type="HAMAP" id="MF_00600">
    <property type="entry name" value="CH60"/>
    <property type="match status" value="1"/>
</dbReference>
<dbReference type="InterPro" id="IPR018370">
    <property type="entry name" value="Chaperonin_Cpn60_CS"/>
</dbReference>
<dbReference type="InterPro" id="IPR001844">
    <property type="entry name" value="Cpn60/GroEL"/>
</dbReference>
<dbReference type="InterPro" id="IPR002423">
    <property type="entry name" value="Cpn60/GroEL/TCP-1"/>
</dbReference>
<dbReference type="InterPro" id="IPR027409">
    <property type="entry name" value="GroEL-like_apical_dom_sf"/>
</dbReference>
<dbReference type="InterPro" id="IPR027413">
    <property type="entry name" value="GROEL-like_equatorial_sf"/>
</dbReference>
<dbReference type="InterPro" id="IPR027410">
    <property type="entry name" value="TCP-1-like_intermed_sf"/>
</dbReference>
<dbReference type="NCBIfam" id="TIGR02348">
    <property type="entry name" value="GroEL"/>
    <property type="match status" value="1"/>
</dbReference>
<dbReference type="NCBIfam" id="NF000592">
    <property type="entry name" value="PRK00013.1"/>
    <property type="match status" value="1"/>
</dbReference>
<dbReference type="NCBIfam" id="NF009487">
    <property type="entry name" value="PRK12849.1"/>
    <property type="match status" value="1"/>
</dbReference>
<dbReference type="NCBIfam" id="NF009488">
    <property type="entry name" value="PRK12850.1"/>
    <property type="match status" value="1"/>
</dbReference>
<dbReference type="NCBIfam" id="NF009489">
    <property type="entry name" value="PRK12851.1"/>
    <property type="match status" value="1"/>
</dbReference>
<dbReference type="PANTHER" id="PTHR45633">
    <property type="entry name" value="60 KDA HEAT SHOCK PROTEIN, MITOCHONDRIAL"/>
    <property type="match status" value="1"/>
</dbReference>
<dbReference type="Pfam" id="PF00118">
    <property type="entry name" value="Cpn60_TCP1"/>
    <property type="match status" value="1"/>
</dbReference>
<dbReference type="PRINTS" id="PR00298">
    <property type="entry name" value="CHAPERONIN60"/>
</dbReference>
<dbReference type="SUPFAM" id="SSF52029">
    <property type="entry name" value="GroEL apical domain-like"/>
    <property type="match status" value="1"/>
</dbReference>
<dbReference type="SUPFAM" id="SSF48592">
    <property type="entry name" value="GroEL equatorial domain-like"/>
    <property type="match status" value="1"/>
</dbReference>
<dbReference type="SUPFAM" id="SSF54849">
    <property type="entry name" value="GroEL-intermediate domain like"/>
    <property type="match status" value="1"/>
</dbReference>
<dbReference type="PROSITE" id="PS00296">
    <property type="entry name" value="CHAPERONINS_CPN60"/>
    <property type="match status" value="1"/>
</dbReference>
<feature type="chain" id="PRO_1000082475" description="Chaperonin GroEL">
    <location>
        <begin position="1"/>
        <end position="543"/>
    </location>
</feature>
<feature type="binding site" evidence="1">
    <location>
        <begin position="29"/>
        <end position="32"/>
    </location>
    <ligand>
        <name>ATP</name>
        <dbReference type="ChEBI" id="CHEBI:30616"/>
    </ligand>
</feature>
<feature type="binding site" evidence="1">
    <location>
        <position position="50"/>
    </location>
    <ligand>
        <name>ATP</name>
        <dbReference type="ChEBI" id="CHEBI:30616"/>
    </ligand>
</feature>
<feature type="binding site" evidence="1">
    <location>
        <begin position="86"/>
        <end position="90"/>
    </location>
    <ligand>
        <name>ATP</name>
        <dbReference type="ChEBI" id="CHEBI:30616"/>
    </ligand>
</feature>
<feature type="binding site" evidence="1">
    <location>
        <position position="415"/>
    </location>
    <ligand>
        <name>ATP</name>
        <dbReference type="ChEBI" id="CHEBI:30616"/>
    </ligand>
</feature>
<feature type="binding site" evidence="1">
    <location>
        <position position="495"/>
    </location>
    <ligand>
        <name>ATP</name>
        <dbReference type="ChEBI" id="CHEBI:30616"/>
    </ligand>
</feature>
<keyword id="KW-0067">ATP-binding</keyword>
<keyword id="KW-0143">Chaperone</keyword>
<keyword id="KW-0963">Cytoplasm</keyword>
<keyword id="KW-0413">Isomerase</keyword>
<keyword id="KW-0547">Nucleotide-binding</keyword>
<organism>
    <name type="scientific">Flavobacterium johnsoniae (strain ATCC 17061 / DSM 2064 / JCM 8514 / BCRC 14874 / CCUG 350202 / NBRC 14942 / NCIMB 11054 / UW101)</name>
    <name type="common">Cytophaga johnsonae</name>
    <dbReference type="NCBI Taxonomy" id="376686"/>
    <lineage>
        <taxon>Bacteria</taxon>
        <taxon>Pseudomonadati</taxon>
        <taxon>Bacteroidota</taxon>
        <taxon>Flavobacteriia</taxon>
        <taxon>Flavobacteriales</taxon>
        <taxon>Flavobacteriaceae</taxon>
        <taxon>Flavobacterium</taxon>
    </lineage>
</organism>
<sequence>MAKDIKFDIEARDGLKRGVDALANAVKVTLGPKGRNVIIGKSFGGPTVTKDGVSVAKEIELKDPLENMGAQMVKEVASKTNDLAGDGTTTATVLAQAIVKEGLKNVAAGANPMDLKRGIDKAVETIVADLAKQAKVVGSDSDKIQQIASISANNDEVIGELIATAFAKVGKEGVITVEEAKGTDTFVDVVEGMQFDRGYLSPYFVTNPEKMEVELDSPYILLYDKKVSSLKELLPVLEPVAQSGKPLLIIAEDVDGEALSTLVVNKLRGALKIAAVKAPGFGDRRKAMLEDIAILTGGTVISEERGYTLENTTIEMLGNAKRVSIDKDNTTIVSGAGEADIIKNRVNQIKGQMETTTSDYDKEKLQERLAKLAGGVAVLYVGAASEVEMKEKKDRVDDALHATRAAVEEGIVAGGGVALLRAKLALADLKADNADEATGIQIVSRAIEAPLRTIVENAGLEGSVVVAKVAEGSGDFGYNAKTDEYVDMLKAGIIDPKKVTRVALENAASVSGMILTTECALIDIKEENAGGGMPMGGGMPGMM</sequence>
<reference key="1">
    <citation type="journal article" date="2009" name="Appl. Environ. Microbiol.">
        <title>Novel features of the polysaccharide-digesting gliding bacterium Flavobacterium johnsoniae as revealed by genome sequence analysis.</title>
        <authorList>
            <person name="McBride M.J."/>
            <person name="Xie G."/>
            <person name="Martens E.C."/>
            <person name="Lapidus A."/>
            <person name="Henrissat B."/>
            <person name="Rhodes R.G."/>
            <person name="Goltsman E."/>
            <person name="Wang W."/>
            <person name="Xu J."/>
            <person name="Hunnicutt D.W."/>
            <person name="Staroscik A.M."/>
            <person name="Hoover T.R."/>
            <person name="Cheng Y.Q."/>
            <person name="Stein J.L."/>
        </authorList>
    </citation>
    <scope>NUCLEOTIDE SEQUENCE [LARGE SCALE GENOMIC DNA]</scope>
    <source>
        <strain>ATCC 17061 / DSM 2064 / JCM 8514 / BCRC 14874 / CCUG 350202 / NBRC 14942 / NCIMB 11054 / UW101</strain>
    </source>
</reference>
<accession>A5FIV1</accession>
<gene>
    <name evidence="1" type="primary">groEL</name>
    <name evidence="1" type="synonym">groL</name>
    <name type="ordered locus">Fjoh_1842</name>
</gene>
<evidence type="ECO:0000255" key="1">
    <source>
        <dbReference type="HAMAP-Rule" id="MF_00600"/>
    </source>
</evidence>
<protein>
    <recommendedName>
        <fullName evidence="1">Chaperonin GroEL</fullName>
        <ecNumber evidence="1">5.6.1.7</ecNumber>
    </recommendedName>
    <alternativeName>
        <fullName evidence="1">60 kDa chaperonin</fullName>
    </alternativeName>
    <alternativeName>
        <fullName evidence="1">Chaperonin-60</fullName>
        <shortName evidence="1">Cpn60</shortName>
    </alternativeName>
</protein>
<proteinExistence type="inferred from homology"/>